<gene>
    <name type="primary">P2rx1</name>
</gene>
<name>P2RX1_MOUSE</name>
<comment type="function">
    <text evidence="3 7 8 9 10">ATP-gated nonselective transmembrane cation channel permeable to potassium, sodium and with relatively high calcium permeability (By similarity). Furthermore, CTP functions as a weak affinity agonist for P2RX1 (By similarity). Plays a role in male fertility, bladder contraction and platelet aggregation (PubMed:10638758, PubMed:11090125, PubMed:19635923, PubMed:25150292). Specifically, plays an important role in neurogenic contraction of smooth muscle of the vas deferens, and therefore is essential for normal male reproductive function (PubMed:10638758). In addition, contributes to smooth muscle contractions of the urinary bladder (PubMed:11090125). On platelets, contributes to platelet activation and aggregation and thereby, also to thrombosis (PubMed:25150292). On neutrophils, it is involved in chemotaxis and in mitigating the activation of circulating cells (PubMed:19635923).</text>
</comment>
<comment type="catalytic activity">
    <reaction evidence="3">
        <text>Ca(2+)(in) = Ca(2+)(out)</text>
        <dbReference type="Rhea" id="RHEA:29671"/>
        <dbReference type="ChEBI" id="CHEBI:29108"/>
    </reaction>
</comment>
<comment type="catalytic activity">
    <reaction evidence="3">
        <text>K(+)(in) = K(+)(out)</text>
        <dbReference type="Rhea" id="RHEA:29463"/>
        <dbReference type="ChEBI" id="CHEBI:29103"/>
    </reaction>
</comment>
<comment type="catalytic activity">
    <reaction evidence="3">
        <text>Na(+)(in) = Na(+)(out)</text>
        <dbReference type="Rhea" id="RHEA:34963"/>
        <dbReference type="ChEBI" id="CHEBI:29101"/>
    </reaction>
</comment>
<comment type="activity regulation">
    <text evidence="3">Activated by low concentrations of ATP (&lt;1 uM). Undergoes rapid desensitisation. Sensitives to the ATP agonist:alpha/beta-methylene-ATP. Modulated by cholesterol.</text>
</comment>
<comment type="subunit">
    <text evidence="2">Functional P2XRs are organized as homomeric and heteromeric trimers. Forms heterodimer with P2RX2. Forms heterodimer with P2RX4. Forms heterodimer with P2RX5.</text>
</comment>
<comment type="subcellular location">
    <subcellularLocation>
        <location evidence="3">Cell membrane</location>
        <topology evidence="4">Multi-pass membrane protein</topology>
    </subcellularLocation>
    <text evidence="3">Detected at plasma membrane lipid rafts.</text>
</comment>
<comment type="tissue specificity">
    <text evidence="8">Expressed in smooth muscle of the bladder and arteries.</text>
</comment>
<comment type="domain">
    <text evidence="3">The N-terminal 20 to 23 and 27 to 29 residues seem to play a role in the cholesterol-dependent gating of this receptor.</text>
</comment>
<comment type="disruption phenotype">
    <text evidence="7 10">Deficient male mice display reduced fertility due to decreased vas deferens contractility and reduced numbers of ejaculated sperm and slight hypertension (PubMed:10638758). P2xr1 deficiency reduces neutrophil recruitment and activation on inflamed arteriolar endothelia, which is accompanied by an impairment of platelet aggregation and fibrin generation (PubMed:25150292).</text>
</comment>
<comment type="similarity">
    <text evidence="11">Belongs to the P2X receptor family.</text>
</comment>
<sequence length="399" mass="44851">MARRLQDELSAFFFEYDTPRMVLVRNKKVGVIFRLIQLVVLVYVIGWVFVYEKGYQTSSGLISSVSVKLKGLAVTQLQGLGPQVWDVADYVFPAHGDSSFVVMTNFIMTPQQAQGHCAENPEGGICQDDSGCTPGKAERKAQGIRTGNCVPFNGTVKTCEIFGWCPVEVDDKIPSPALLHEAENFTLFIKNSISFPRFKVNRRNLVEEVNGTYMKKCLYHKILHPLCPVFSLGYVVRESGQDFRSLAEKGGVVGITIDWECDLDWHVRHCKPIYQFHGLYGEKNLSPGFNFRFARHFVQNGTNRRHLFKVFGIRFDILVDGKAGKFDIIPTMTTIGSGIGIFGVATVLCDLLLLHILPKRHYYKQKKFKYAEDMGPGEGERDPAATSSTLGLQENMRTS</sequence>
<proteinExistence type="evidence at transcript level"/>
<evidence type="ECO:0000250" key="1">
    <source>
        <dbReference type="UniProtKB" id="F8W463"/>
    </source>
</evidence>
<evidence type="ECO:0000250" key="2">
    <source>
        <dbReference type="UniProtKB" id="P47824"/>
    </source>
</evidence>
<evidence type="ECO:0000250" key="3">
    <source>
        <dbReference type="UniProtKB" id="P51575"/>
    </source>
</evidence>
<evidence type="ECO:0000250" key="4">
    <source>
        <dbReference type="UniProtKB" id="P56373"/>
    </source>
</evidence>
<evidence type="ECO:0000255" key="5"/>
<evidence type="ECO:0000256" key="6">
    <source>
        <dbReference type="SAM" id="MobiDB-lite"/>
    </source>
</evidence>
<evidence type="ECO:0000269" key="7">
    <source>
    </source>
</evidence>
<evidence type="ECO:0000269" key="8">
    <source>
    </source>
</evidence>
<evidence type="ECO:0000269" key="9">
    <source>
    </source>
</evidence>
<evidence type="ECO:0000269" key="10">
    <source>
    </source>
</evidence>
<evidence type="ECO:0000305" key="11"/>
<accession>P51576</accession>
<accession>Q5SRU4</accession>
<protein>
    <recommendedName>
        <fullName>P2X purinoceptor 1</fullName>
        <shortName>P2X1</shortName>
    </recommendedName>
    <alternativeName>
        <fullName>ATP receptor</fullName>
    </alternativeName>
    <alternativeName>
        <fullName>Purinergic receptor</fullName>
    </alternativeName>
</protein>
<dbReference type="EMBL" id="X84896">
    <property type="protein sequence ID" value="CAA59322.1"/>
    <property type="molecule type" value="mRNA"/>
</dbReference>
<dbReference type="EMBL" id="AF250123">
    <property type="protein sequence ID" value="AAF68968.1"/>
    <property type="molecule type" value="Genomic_DNA"/>
</dbReference>
<dbReference type="EMBL" id="AF250121">
    <property type="protein sequence ID" value="AAF68968.1"/>
    <property type="status" value="JOINED"/>
    <property type="molecule type" value="Genomic_DNA"/>
</dbReference>
<dbReference type="EMBL" id="AF250122">
    <property type="protein sequence ID" value="AAF68968.1"/>
    <property type="status" value="JOINED"/>
    <property type="molecule type" value="Genomic_DNA"/>
</dbReference>
<dbReference type="EMBL" id="AK035304">
    <property type="protein sequence ID" value="BAC29024.1"/>
    <property type="molecule type" value="mRNA"/>
</dbReference>
<dbReference type="EMBL" id="AL670399">
    <property type="status" value="NOT_ANNOTATED_CDS"/>
    <property type="molecule type" value="Genomic_DNA"/>
</dbReference>
<dbReference type="CCDS" id="CCDS24992.1"/>
<dbReference type="RefSeq" id="NP_032797.3">
    <property type="nucleotide sequence ID" value="NM_008771.3"/>
</dbReference>
<dbReference type="SMR" id="P51576"/>
<dbReference type="FunCoup" id="P51576">
    <property type="interactions" value="557"/>
</dbReference>
<dbReference type="STRING" id="10090.ENSMUSP00000021141"/>
<dbReference type="BindingDB" id="P51576"/>
<dbReference type="ChEMBL" id="CHEMBL5496"/>
<dbReference type="GlyCosmos" id="P51576">
    <property type="glycosylation" value="4 sites, No reported glycans"/>
</dbReference>
<dbReference type="GlyGen" id="P51576">
    <property type="glycosylation" value="5 sites, 2 N-linked glycans (2 sites)"/>
</dbReference>
<dbReference type="iPTMnet" id="P51576"/>
<dbReference type="PhosphoSitePlus" id="P51576"/>
<dbReference type="PaxDb" id="10090-ENSMUSP00000021141"/>
<dbReference type="ProteomicsDB" id="287747"/>
<dbReference type="Antibodypedia" id="3473">
    <property type="antibodies" value="196 antibodies from 28 providers"/>
</dbReference>
<dbReference type="DNASU" id="18436"/>
<dbReference type="Ensembl" id="ENSMUST00000021141.14">
    <property type="protein sequence ID" value="ENSMUSP00000021141.8"/>
    <property type="gene ID" value="ENSMUSG00000020787.15"/>
</dbReference>
<dbReference type="GeneID" id="18436"/>
<dbReference type="KEGG" id="mmu:18436"/>
<dbReference type="UCSC" id="uc007jzq.2">
    <property type="organism name" value="mouse"/>
</dbReference>
<dbReference type="AGR" id="MGI:1098235"/>
<dbReference type="CTD" id="5023"/>
<dbReference type="MGI" id="MGI:1098235">
    <property type="gene designation" value="P2rx1"/>
</dbReference>
<dbReference type="VEuPathDB" id="HostDB:ENSMUSG00000020787"/>
<dbReference type="eggNOG" id="ENOG502QSUI">
    <property type="taxonomic scope" value="Eukaryota"/>
</dbReference>
<dbReference type="GeneTree" id="ENSGT01020000230351"/>
<dbReference type="HOGENOM" id="CLU_034469_2_0_1"/>
<dbReference type="InParanoid" id="P51576"/>
<dbReference type="OMA" id="DCDLDWS"/>
<dbReference type="OrthoDB" id="494673at2759"/>
<dbReference type="PhylomeDB" id="P51576"/>
<dbReference type="TreeFam" id="TF328633"/>
<dbReference type="Reactome" id="R-MMU-139853">
    <property type="pathway name" value="Elevation of cytosolic Ca2+ levels"/>
</dbReference>
<dbReference type="Reactome" id="R-MMU-418346">
    <property type="pathway name" value="Platelet homeostasis"/>
</dbReference>
<dbReference type="Reactome" id="R-MMU-6798695">
    <property type="pathway name" value="Neutrophil degranulation"/>
</dbReference>
<dbReference type="BioGRID-ORCS" id="18436">
    <property type="hits" value="3 hits in 77 CRISPR screens"/>
</dbReference>
<dbReference type="ChiTaRS" id="P2rx1">
    <property type="organism name" value="mouse"/>
</dbReference>
<dbReference type="PRO" id="PR:P51576"/>
<dbReference type="Proteomes" id="UP000000589">
    <property type="component" value="Chromosome 11"/>
</dbReference>
<dbReference type="RNAct" id="P51576">
    <property type="molecule type" value="protein"/>
</dbReference>
<dbReference type="Bgee" id="ENSMUSG00000020787">
    <property type="expression patterns" value="Expressed in urinary bladder detrusor smooth muscle and 85 other cell types or tissues"/>
</dbReference>
<dbReference type="ExpressionAtlas" id="P51576">
    <property type="expression patterns" value="baseline and differential"/>
</dbReference>
<dbReference type="GO" id="GO:0009897">
    <property type="term" value="C:external side of plasma membrane"/>
    <property type="evidence" value="ECO:0000314"/>
    <property type="project" value="MGI"/>
</dbReference>
<dbReference type="GO" id="GO:0098978">
    <property type="term" value="C:glutamatergic synapse"/>
    <property type="evidence" value="ECO:0007669"/>
    <property type="project" value="Ensembl"/>
</dbReference>
<dbReference type="GO" id="GO:0045121">
    <property type="term" value="C:membrane raft"/>
    <property type="evidence" value="ECO:0007669"/>
    <property type="project" value="Ensembl"/>
</dbReference>
<dbReference type="GO" id="GO:0045211">
    <property type="term" value="C:postsynaptic membrane"/>
    <property type="evidence" value="ECO:0000314"/>
    <property type="project" value="MGI"/>
</dbReference>
<dbReference type="GO" id="GO:0048787">
    <property type="term" value="C:presynaptic active zone membrane"/>
    <property type="evidence" value="ECO:0007669"/>
    <property type="project" value="Ensembl"/>
</dbReference>
<dbReference type="GO" id="GO:0032991">
    <property type="term" value="C:protein-containing complex"/>
    <property type="evidence" value="ECO:0007669"/>
    <property type="project" value="Ensembl"/>
</dbReference>
<dbReference type="GO" id="GO:0005524">
    <property type="term" value="F:ATP binding"/>
    <property type="evidence" value="ECO:0007669"/>
    <property type="project" value="UniProtKB-KW"/>
</dbReference>
<dbReference type="GO" id="GO:0004931">
    <property type="term" value="F:extracellularly ATP-gated monoatomic cation channel activity"/>
    <property type="evidence" value="ECO:0007669"/>
    <property type="project" value="Ensembl"/>
</dbReference>
<dbReference type="GO" id="GO:0042802">
    <property type="term" value="F:identical protein binding"/>
    <property type="evidence" value="ECO:0007669"/>
    <property type="project" value="Ensembl"/>
</dbReference>
<dbReference type="GO" id="GO:0099604">
    <property type="term" value="F:ligand-gated calcium channel activity"/>
    <property type="evidence" value="ECO:0007669"/>
    <property type="project" value="Ensembl"/>
</dbReference>
<dbReference type="GO" id="GO:0005261">
    <property type="term" value="F:monoatomic cation channel activity"/>
    <property type="evidence" value="ECO:0000315"/>
    <property type="project" value="MGI"/>
</dbReference>
<dbReference type="GO" id="GO:0044877">
    <property type="term" value="F:protein-containing complex binding"/>
    <property type="evidence" value="ECO:0007669"/>
    <property type="project" value="Ensembl"/>
</dbReference>
<dbReference type="GO" id="GO:0001614">
    <property type="term" value="F:purinergic nucleotide receptor activity"/>
    <property type="evidence" value="ECO:0000315"/>
    <property type="project" value="MGI"/>
</dbReference>
<dbReference type="GO" id="GO:0043924">
    <property type="term" value="F:suramin binding"/>
    <property type="evidence" value="ECO:0007669"/>
    <property type="project" value="Ensembl"/>
</dbReference>
<dbReference type="GO" id="GO:0006915">
    <property type="term" value="P:apoptotic process"/>
    <property type="evidence" value="ECO:0007669"/>
    <property type="project" value="UniProtKB-KW"/>
</dbReference>
<dbReference type="GO" id="GO:0046513">
    <property type="term" value="P:ceramide biosynthetic process"/>
    <property type="evidence" value="ECO:0000314"/>
    <property type="project" value="MGI"/>
</dbReference>
<dbReference type="GO" id="GO:0051649">
    <property type="term" value="P:establishment of localization in cell"/>
    <property type="evidence" value="ECO:0000315"/>
    <property type="project" value="MGI"/>
</dbReference>
<dbReference type="GO" id="GO:0007320">
    <property type="term" value="P:insemination"/>
    <property type="evidence" value="ECO:0000315"/>
    <property type="project" value="MGI"/>
</dbReference>
<dbReference type="GO" id="GO:0006811">
    <property type="term" value="P:monoatomic ion transport"/>
    <property type="evidence" value="ECO:0000315"/>
    <property type="project" value="MGI"/>
</dbReference>
<dbReference type="GO" id="GO:0019228">
    <property type="term" value="P:neuronal action potential"/>
    <property type="evidence" value="ECO:0007669"/>
    <property type="project" value="Ensembl"/>
</dbReference>
<dbReference type="GO" id="GO:0030168">
    <property type="term" value="P:platelet activation"/>
    <property type="evidence" value="ECO:0000315"/>
    <property type="project" value="MGI"/>
</dbReference>
<dbReference type="GO" id="GO:1905665">
    <property type="term" value="P:positive regulation of calcium ion import across plasma membrane"/>
    <property type="evidence" value="ECO:0007669"/>
    <property type="project" value="Ensembl"/>
</dbReference>
<dbReference type="GO" id="GO:0043270">
    <property type="term" value="P:positive regulation of monoatomic ion transport"/>
    <property type="evidence" value="ECO:0000315"/>
    <property type="project" value="MGI"/>
</dbReference>
<dbReference type="GO" id="GO:0008217">
    <property type="term" value="P:regulation of blood pressure"/>
    <property type="evidence" value="ECO:0007669"/>
    <property type="project" value="Ensembl"/>
</dbReference>
<dbReference type="GO" id="GO:0051924">
    <property type="term" value="P:regulation of calcium ion transport"/>
    <property type="evidence" value="ECO:0000315"/>
    <property type="project" value="MGI"/>
</dbReference>
<dbReference type="GO" id="GO:0099509">
    <property type="term" value="P:regulation of presynaptic cytosolic calcium ion concentration"/>
    <property type="evidence" value="ECO:0007669"/>
    <property type="project" value="Ensembl"/>
</dbReference>
<dbReference type="GO" id="GO:0006940">
    <property type="term" value="P:regulation of smooth muscle contraction"/>
    <property type="evidence" value="ECO:0000315"/>
    <property type="project" value="MGI"/>
</dbReference>
<dbReference type="GO" id="GO:2000300">
    <property type="term" value="P:regulation of synaptic vesicle exocytosis"/>
    <property type="evidence" value="ECO:0007669"/>
    <property type="project" value="Ensembl"/>
</dbReference>
<dbReference type="GO" id="GO:0003056">
    <property type="term" value="P:regulation of vascular associated smooth muscle contraction"/>
    <property type="evidence" value="ECO:0000315"/>
    <property type="project" value="MGI"/>
</dbReference>
<dbReference type="GO" id="GO:0019229">
    <property type="term" value="P:regulation of vasoconstriction"/>
    <property type="evidence" value="ECO:0000315"/>
    <property type="project" value="MGI"/>
</dbReference>
<dbReference type="GO" id="GO:0033198">
    <property type="term" value="P:response to ATP"/>
    <property type="evidence" value="ECO:0000315"/>
    <property type="project" value="MGI"/>
</dbReference>
<dbReference type="GO" id="GO:0002554">
    <property type="term" value="P:serotonin secretion by platelet"/>
    <property type="evidence" value="ECO:0000315"/>
    <property type="project" value="MGI"/>
</dbReference>
<dbReference type="GO" id="GO:0035249">
    <property type="term" value="P:synaptic transmission, glutamatergic"/>
    <property type="evidence" value="ECO:0007669"/>
    <property type="project" value="Ensembl"/>
</dbReference>
<dbReference type="FunFam" id="2.60.490.10:FF:000001">
    <property type="entry name" value="P2X purinoceptor"/>
    <property type="match status" value="1"/>
</dbReference>
<dbReference type="Gene3D" id="1.10.287.940">
    <property type="entry name" value="atp-gated p2x4 ion channel"/>
    <property type="match status" value="1"/>
</dbReference>
<dbReference type="Gene3D" id="2.60.490.10">
    <property type="entry name" value="atp-gated p2x4 ion channel domain"/>
    <property type="match status" value="1"/>
</dbReference>
<dbReference type="InterPro" id="IPR003044">
    <property type="entry name" value="P2X1_purnocptor"/>
</dbReference>
<dbReference type="InterPro" id="IPR027309">
    <property type="entry name" value="P2X_extracellular_dom_sf"/>
</dbReference>
<dbReference type="InterPro" id="IPR001429">
    <property type="entry name" value="P2X_purnocptor"/>
</dbReference>
<dbReference type="InterPro" id="IPR053792">
    <property type="entry name" value="P2X_RECEPTOR_CS"/>
</dbReference>
<dbReference type="NCBIfam" id="TIGR00863">
    <property type="entry name" value="P2X"/>
    <property type="match status" value="1"/>
</dbReference>
<dbReference type="PANTHER" id="PTHR10125">
    <property type="entry name" value="P2X PURINOCEPTOR"/>
    <property type="match status" value="1"/>
</dbReference>
<dbReference type="PANTHER" id="PTHR10125:SF9">
    <property type="entry name" value="P2X PURINOCEPTOR 1"/>
    <property type="match status" value="1"/>
</dbReference>
<dbReference type="Pfam" id="PF00864">
    <property type="entry name" value="P2X_receptor"/>
    <property type="match status" value="1"/>
</dbReference>
<dbReference type="PIRSF" id="PIRSF005713">
    <property type="entry name" value="P2X_purinoceptor"/>
    <property type="match status" value="1"/>
</dbReference>
<dbReference type="PRINTS" id="PR01308">
    <property type="entry name" value="P2X1RECEPTOR"/>
</dbReference>
<dbReference type="PRINTS" id="PR01307">
    <property type="entry name" value="P2XRECEPTOR"/>
</dbReference>
<dbReference type="PROSITE" id="PS01212">
    <property type="entry name" value="P2X_RECEPTOR"/>
    <property type="match status" value="1"/>
</dbReference>
<keyword id="KW-0053">Apoptosis</keyword>
<keyword id="KW-0067">ATP-binding</keyword>
<keyword id="KW-1003">Cell membrane</keyword>
<keyword id="KW-1015">Disulfide bond</keyword>
<keyword id="KW-0325">Glycoprotein</keyword>
<keyword id="KW-0407">Ion channel</keyword>
<keyword id="KW-0406">Ion transport</keyword>
<keyword id="KW-1071">Ligand-gated ion channel</keyword>
<keyword id="KW-0472">Membrane</keyword>
<keyword id="KW-0547">Nucleotide-binding</keyword>
<keyword id="KW-0597">Phosphoprotein</keyword>
<keyword id="KW-0675">Receptor</keyword>
<keyword id="KW-1185">Reference proteome</keyword>
<keyword id="KW-0812">Transmembrane</keyword>
<keyword id="KW-1133">Transmembrane helix</keyword>
<keyword id="KW-0813">Transport</keyword>
<reference key="1">
    <citation type="journal article" date="1995" name="Recept. Channels">
        <title>Characterization and chromosomal localization of a human P2X receptor from the urinary bladder.</title>
        <authorList>
            <person name="Valera S."/>
            <person name="Talabot F."/>
            <person name="Evans R.J."/>
            <person name="Gos A."/>
            <person name="Antonarakis S.E."/>
            <person name="Morris M.A."/>
            <person name="Buell G.N."/>
        </authorList>
    </citation>
    <scope>NUCLEOTIDE SEQUENCE [MRNA]</scope>
    <source>
        <strain>OF1</strain>
        <tissue>Urinary bladder smooth muscle</tissue>
    </source>
</reference>
<reference key="2">
    <citation type="submission" date="2000-03" db="EMBL/GenBank/DDBJ databases">
        <title>Mouse P2X1 purinergic receptor gene structure.</title>
        <authorList>
            <person name="Yu X.-M."/>
            <person name="Connolly A.J."/>
        </authorList>
    </citation>
    <scope>NUCLEOTIDE SEQUENCE [GENOMIC DNA]</scope>
    <source>
        <strain>129/SvJ</strain>
    </source>
</reference>
<reference key="3">
    <citation type="journal article" date="2005" name="Science">
        <title>The transcriptional landscape of the mammalian genome.</title>
        <authorList>
            <person name="Carninci P."/>
            <person name="Kasukawa T."/>
            <person name="Katayama S."/>
            <person name="Gough J."/>
            <person name="Frith M.C."/>
            <person name="Maeda N."/>
            <person name="Oyama R."/>
            <person name="Ravasi T."/>
            <person name="Lenhard B."/>
            <person name="Wells C."/>
            <person name="Kodzius R."/>
            <person name="Shimokawa K."/>
            <person name="Bajic V.B."/>
            <person name="Brenner S.E."/>
            <person name="Batalov S."/>
            <person name="Forrest A.R."/>
            <person name="Zavolan M."/>
            <person name="Davis M.J."/>
            <person name="Wilming L.G."/>
            <person name="Aidinis V."/>
            <person name="Allen J.E."/>
            <person name="Ambesi-Impiombato A."/>
            <person name="Apweiler R."/>
            <person name="Aturaliya R.N."/>
            <person name="Bailey T.L."/>
            <person name="Bansal M."/>
            <person name="Baxter L."/>
            <person name="Beisel K.W."/>
            <person name="Bersano T."/>
            <person name="Bono H."/>
            <person name="Chalk A.M."/>
            <person name="Chiu K.P."/>
            <person name="Choudhary V."/>
            <person name="Christoffels A."/>
            <person name="Clutterbuck D.R."/>
            <person name="Crowe M.L."/>
            <person name="Dalla E."/>
            <person name="Dalrymple B.P."/>
            <person name="de Bono B."/>
            <person name="Della Gatta G."/>
            <person name="di Bernardo D."/>
            <person name="Down T."/>
            <person name="Engstrom P."/>
            <person name="Fagiolini M."/>
            <person name="Faulkner G."/>
            <person name="Fletcher C.F."/>
            <person name="Fukushima T."/>
            <person name="Furuno M."/>
            <person name="Futaki S."/>
            <person name="Gariboldi M."/>
            <person name="Georgii-Hemming P."/>
            <person name="Gingeras T.R."/>
            <person name="Gojobori T."/>
            <person name="Green R.E."/>
            <person name="Gustincich S."/>
            <person name="Harbers M."/>
            <person name="Hayashi Y."/>
            <person name="Hensch T.K."/>
            <person name="Hirokawa N."/>
            <person name="Hill D."/>
            <person name="Huminiecki L."/>
            <person name="Iacono M."/>
            <person name="Ikeo K."/>
            <person name="Iwama A."/>
            <person name="Ishikawa T."/>
            <person name="Jakt M."/>
            <person name="Kanapin A."/>
            <person name="Katoh M."/>
            <person name="Kawasawa Y."/>
            <person name="Kelso J."/>
            <person name="Kitamura H."/>
            <person name="Kitano H."/>
            <person name="Kollias G."/>
            <person name="Krishnan S.P."/>
            <person name="Kruger A."/>
            <person name="Kummerfeld S.K."/>
            <person name="Kurochkin I.V."/>
            <person name="Lareau L.F."/>
            <person name="Lazarevic D."/>
            <person name="Lipovich L."/>
            <person name="Liu J."/>
            <person name="Liuni S."/>
            <person name="McWilliam S."/>
            <person name="Madan Babu M."/>
            <person name="Madera M."/>
            <person name="Marchionni L."/>
            <person name="Matsuda H."/>
            <person name="Matsuzawa S."/>
            <person name="Miki H."/>
            <person name="Mignone F."/>
            <person name="Miyake S."/>
            <person name="Morris K."/>
            <person name="Mottagui-Tabar S."/>
            <person name="Mulder N."/>
            <person name="Nakano N."/>
            <person name="Nakauchi H."/>
            <person name="Ng P."/>
            <person name="Nilsson R."/>
            <person name="Nishiguchi S."/>
            <person name="Nishikawa S."/>
            <person name="Nori F."/>
            <person name="Ohara O."/>
            <person name="Okazaki Y."/>
            <person name="Orlando V."/>
            <person name="Pang K.C."/>
            <person name="Pavan W.J."/>
            <person name="Pavesi G."/>
            <person name="Pesole G."/>
            <person name="Petrovsky N."/>
            <person name="Piazza S."/>
            <person name="Reed J."/>
            <person name="Reid J.F."/>
            <person name="Ring B.Z."/>
            <person name="Ringwald M."/>
            <person name="Rost B."/>
            <person name="Ruan Y."/>
            <person name="Salzberg S.L."/>
            <person name="Sandelin A."/>
            <person name="Schneider C."/>
            <person name="Schoenbach C."/>
            <person name="Sekiguchi K."/>
            <person name="Semple C.A."/>
            <person name="Seno S."/>
            <person name="Sessa L."/>
            <person name="Sheng Y."/>
            <person name="Shibata Y."/>
            <person name="Shimada H."/>
            <person name="Shimada K."/>
            <person name="Silva D."/>
            <person name="Sinclair B."/>
            <person name="Sperling S."/>
            <person name="Stupka E."/>
            <person name="Sugiura K."/>
            <person name="Sultana R."/>
            <person name="Takenaka Y."/>
            <person name="Taki K."/>
            <person name="Tammoja K."/>
            <person name="Tan S.L."/>
            <person name="Tang S."/>
            <person name="Taylor M.S."/>
            <person name="Tegner J."/>
            <person name="Teichmann S.A."/>
            <person name="Ueda H.R."/>
            <person name="van Nimwegen E."/>
            <person name="Verardo R."/>
            <person name="Wei C.L."/>
            <person name="Yagi K."/>
            <person name="Yamanishi H."/>
            <person name="Zabarovsky E."/>
            <person name="Zhu S."/>
            <person name="Zimmer A."/>
            <person name="Hide W."/>
            <person name="Bult C."/>
            <person name="Grimmond S.M."/>
            <person name="Teasdale R.D."/>
            <person name="Liu E.T."/>
            <person name="Brusic V."/>
            <person name="Quackenbush J."/>
            <person name="Wahlestedt C."/>
            <person name="Mattick J.S."/>
            <person name="Hume D.A."/>
            <person name="Kai C."/>
            <person name="Sasaki D."/>
            <person name="Tomaru Y."/>
            <person name="Fukuda S."/>
            <person name="Kanamori-Katayama M."/>
            <person name="Suzuki M."/>
            <person name="Aoki J."/>
            <person name="Arakawa T."/>
            <person name="Iida J."/>
            <person name="Imamura K."/>
            <person name="Itoh M."/>
            <person name="Kato T."/>
            <person name="Kawaji H."/>
            <person name="Kawagashira N."/>
            <person name="Kawashima T."/>
            <person name="Kojima M."/>
            <person name="Kondo S."/>
            <person name="Konno H."/>
            <person name="Nakano K."/>
            <person name="Ninomiya N."/>
            <person name="Nishio T."/>
            <person name="Okada M."/>
            <person name="Plessy C."/>
            <person name="Shibata K."/>
            <person name="Shiraki T."/>
            <person name="Suzuki S."/>
            <person name="Tagami M."/>
            <person name="Waki K."/>
            <person name="Watahiki A."/>
            <person name="Okamura-Oho Y."/>
            <person name="Suzuki H."/>
            <person name="Kawai J."/>
            <person name="Hayashizaki Y."/>
        </authorList>
    </citation>
    <scope>NUCLEOTIDE SEQUENCE [LARGE SCALE MRNA]</scope>
    <source>
        <strain>C57BL/6J</strain>
        <tissue>Urinary bladder</tissue>
    </source>
</reference>
<reference key="4">
    <citation type="journal article" date="2009" name="PLoS Biol.">
        <title>Lineage-specific biology revealed by a finished genome assembly of the mouse.</title>
        <authorList>
            <person name="Church D.M."/>
            <person name="Goodstadt L."/>
            <person name="Hillier L.W."/>
            <person name="Zody M.C."/>
            <person name="Goldstein S."/>
            <person name="She X."/>
            <person name="Bult C.J."/>
            <person name="Agarwala R."/>
            <person name="Cherry J.L."/>
            <person name="DiCuccio M."/>
            <person name="Hlavina W."/>
            <person name="Kapustin Y."/>
            <person name="Meric P."/>
            <person name="Maglott D."/>
            <person name="Birtle Z."/>
            <person name="Marques A.C."/>
            <person name="Graves T."/>
            <person name="Zhou S."/>
            <person name="Teague B."/>
            <person name="Potamousis K."/>
            <person name="Churas C."/>
            <person name="Place M."/>
            <person name="Herschleb J."/>
            <person name="Runnheim R."/>
            <person name="Forrest D."/>
            <person name="Amos-Landgraf J."/>
            <person name="Schwartz D.C."/>
            <person name="Cheng Z."/>
            <person name="Lindblad-Toh K."/>
            <person name="Eichler E.E."/>
            <person name="Ponting C.P."/>
        </authorList>
    </citation>
    <scope>NUCLEOTIDE SEQUENCE [LARGE SCALE GENOMIC DNA]</scope>
    <source>
        <strain>C57BL/6J</strain>
    </source>
</reference>
<reference key="5">
    <citation type="journal article" date="2000" name="Br. J. Pharmacol.">
        <title>P2X receptor expression in mouse urinary bladder and the requirement of P2X(1) receptors for functional P2X receptor responses in the mouse urinary bladder smooth muscle.</title>
        <authorList>
            <person name="Vial C."/>
            <person name="Evans R.J."/>
        </authorList>
    </citation>
    <scope>TISSUE SPECIFICITY</scope>
    <scope>FUNCTION</scope>
</reference>
<reference key="6">
    <citation type="journal article" date="2000" name="Nature">
        <title>Reduced vas deferens contraction and male infertility in mice lacking P2X1 receptors.</title>
        <authorList>
            <person name="Mulryan K."/>
            <person name="Gitterman D.P."/>
            <person name="Lewis C.J."/>
            <person name="Vial C."/>
            <person name="Leckie B.J."/>
            <person name="Cobb A.L."/>
            <person name="Brown J.E."/>
            <person name="Conley E.C."/>
            <person name="Buell G."/>
            <person name="Pritchard C.A."/>
            <person name="Evans R.J."/>
        </authorList>
    </citation>
    <scope>DISRUPTION PHENOTYPE</scope>
    <scope>FUNCTION</scope>
</reference>
<reference key="7">
    <citation type="journal article" date="2009" name="J. Immunol.">
        <title>P2X1 ion channels promote neutrophil chemotaxis through Rho kinase activation.</title>
        <authorList>
            <person name="Lecut C."/>
            <person name="Frederix K."/>
            <person name="Johnson D.M."/>
            <person name="Deroanne C."/>
            <person name="Thiry M."/>
            <person name="Faccinetto C."/>
            <person name="Maree R."/>
            <person name="Evans R.J."/>
            <person name="Volders P.G."/>
            <person name="Bours V."/>
            <person name="Oury C."/>
        </authorList>
    </citation>
    <scope>FUNCTION</scope>
    <scope>TISSUE SPECIFICITY</scope>
</reference>
<reference key="8">
    <citation type="journal article" date="2014" name="Blood">
        <title>P2X1 expressed on polymorphonuclear neutrophils and platelets is required for thrombosis in mice.</title>
        <authorList>
            <person name="Darbousset R."/>
            <person name="Delierneux C."/>
            <person name="Mezouar S."/>
            <person name="Hego A."/>
            <person name="Lecut C."/>
            <person name="Guillaumat I."/>
            <person name="Riederer M.A."/>
            <person name="Evans R.J."/>
            <person name="Dignat-George F."/>
            <person name="Panicot-Dubois L."/>
            <person name="Oury C."/>
            <person name="Dubois C."/>
        </authorList>
    </citation>
    <scope>DISRUPTION PHENOTYPE</scope>
    <scope>FUNCTION</scope>
</reference>
<feature type="chain" id="PRO_0000161546" description="P2X purinoceptor 1">
    <location>
        <begin position="1"/>
        <end position="399"/>
    </location>
</feature>
<feature type="topological domain" description="Cytoplasmic" evidence="4">
    <location>
        <begin position="1"/>
        <end position="28"/>
    </location>
</feature>
<feature type="transmembrane region" description="Helical; Name=1" evidence="5">
    <location>
        <begin position="29"/>
        <end position="50"/>
    </location>
</feature>
<feature type="topological domain" description="Extracellular" evidence="4">
    <location>
        <begin position="51"/>
        <end position="338"/>
    </location>
</feature>
<feature type="transmembrane region" description="Helical; Name=2" evidence="5">
    <location>
        <begin position="339"/>
        <end position="358"/>
    </location>
</feature>
<feature type="topological domain" description="Cytoplasmic" evidence="4">
    <location>
        <begin position="359"/>
        <end position="399"/>
    </location>
</feature>
<feature type="region of interest" description="Pore-forming motif" evidence="5">
    <location>
        <begin position="331"/>
        <end position="338"/>
    </location>
</feature>
<feature type="region of interest" description="Disordered" evidence="6">
    <location>
        <begin position="374"/>
        <end position="399"/>
    </location>
</feature>
<feature type="compositionally biased region" description="Polar residues" evidence="6">
    <location>
        <begin position="385"/>
        <end position="399"/>
    </location>
</feature>
<feature type="binding site" evidence="1">
    <location>
        <position position="68"/>
    </location>
    <ligand>
        <name>CTP</name>
        <dbReference type="ChEBI" id="CHEBI:37563"/>
    </ligand>
</feature>
<feature type="binding site" evidence="4">
    <location>
        <position position="70"/>
    </location>
    <ligand>
        <name>ATP</name>
        <dbReference type="ChEBI" id="CHEBI:30616"/>
    </ligand>
</feature>
<feature type="binding site" evidence="1">
    <location>
        <position position="70"/>
    </location>
    <ligand>
        <name>CTP</name>
        <dbReference type="ChEBI" id="CHEBI:37563"/>
    </ligand>
</feature>
<feature type="binding site" evidence="1">
    <location>
        <position position="140"/>
    </location>
    <ligand>
        <name>CTP</name>
        <dbReference type="ChEBI" id="CHEBI:37563"/>
    </ligand>
</feature>
<feature type="binding site" evidence="4">
    <location>
        <position position="186"/>
    </location>
    <ligand>
        <name>ATP</name>
        <dbReference type="ChEBI" id="CHEBI:30616"/>
    </ligand>
</feature>
<feature type="binding site" evidence="1">
    <location>
        <position position="186"/>
    </location>
    <ligand>
        <name>CTP</name>
        <dbReference type="ChEBI" id="CHEBI:37563"/>
    </ligand>
</feature>
<feature type="binding site" evidence="4">
    <location>
        <position position="286"/>
    </location>
    <ligand>
        <name>ATP</name>
        <dbReference type="ChEBI" id="CHEBI:30616"/>
    </ligand>
</feature>
<feature type="binding site" evidence="4">
    <location>
        <position position="290"/>
    </location>
    <ligand>
        <name>ATP</name>
        <dbReference type="ChEBI" id="CHEBI:30616"/>
    </ligand>
</feature>
<feature type="binding site" evidence="1">
    <location>
        <position position="290"/>
    </location>
    <ligand>
        <name>CTP</name>
        <dbReference type="ChEBI" id="CHEBI:37563"/>
    </ligand>
</feature>
<feature type="binding site" evidence="4">
    <location>
        <position position="292"/>
    </location>
    <ligand>
        <name>ATP</name>
        <dbReference type="ChEBI" id="CHEBI:30616"/>
    </ligand>
</feature>
<feature type="binding site" evidence="1">
    <location>
        <position position="292"/>
    </location>
    <ligand>
        <name>CTP</name>
        <dbReference type="ChEBI" id="CHEBI:37563"/>
    </ligand>
</feature>
<feature type="binding site" evidence="4">
    <location>
        <position position="309"/>
    </location>
    <ligand>
        <name>ATP</name>
        <dbReference type="ChEBI" id="CHEBI:30616"/>
    </ligand>
</feature>
<feature type="binding site" evidence="1">
    <location>
        <position position="309"/>
    </location>
    <ligand>
        <name>CTP</name>
        <dbReference type="ChEBI" id="CHEBI:37563"/>
    </ligand>
</feature>
<feature type="modified residue" description="Phosphoserine" evidence="3">
    <location>
        <position position="387"/>
    </location>
</feature>
<feature type="modified residue" description="Phosphoserine" evidence="3">
    <location>
        <position position="388"/>
    </location>
</feature>
<feature type="modified residue" description="Phosphothreonine" evidence="3">
    <location>
        <position position="389"/>
    </location>
</feature>
<feature type="glycosylation site" description="N-linked (GlcNAc...) asparagine" evidence="5">
    <location>
        <position position="153"/>
    </location>
</feature>
<feature type="glycosylation site" description="N-linked (GlcNAc...) asparagine" evidence="5">
    <location>
        <position position="184"/>
    </location>
</feature>
<feature type="glycosylation site" description="N-linked (GlcNAc...) asparagine" evidence="5">
    <location>
        <position position="210"/>
    </location>
</feature>
<feature type="glycosylation site" description="N-linked (GlcNAc...) asparagine" evidence="5">
    <location>
        <position position="300"/>
    </location>
</feature>
<feature type="disulfide bond" evidence="3">
    <location>
        <begin position="117"/>
        <end position="165"/>
    </location>
</feature>
<feature type="disulfide bond" evidence="3">
    <location>
        <begin position="126"/>
        <end position="149"/>
    </location>
</feature>
<feature type="disulfide bond" evidence="3">
    <location>
        <begin position="132"/>
        <end position="159"/>
    </location>
</feature>
<feature type="disulfide bond" evidence="3">
    <location>
        <begin position="217"/>
        <end position="227"/>
    </location>
</feature>
<feature type="disulfide bond" evidence="3">
    <location>
        <begin position="261"/>
        <end position="270"/>
    </location>
</feature>
<organism>
    <name type="scientific">Mus musculus</name>
    <name type="common">Mouse</name>
    <dbReference type="NCBI Taxonomy" id="10090"/>
    <lineage>
        <taxon>Eukaryota</taxon>
        <taxon>Metazoa</taxon>
        <taxon>Chordata</taxon>
        <taxon>Craniata</taxon>
        <taxon>Vertebrata</taxon>
        <taxon>Euteleostomi</taxon>
        <taxon>Mammalia</taxon>
        <taxon>Eutheria</taxon>
        <taxon>Euarchontoglires</taxon>
        <taxon>Glires</taxon>
        <taxon>Rodentia</taxon>
        <taxon>Myomorpha</taxon>
        <taxon>Muroidea</taxon>
        <taxon>Muridae</taxon>
        <taxon>Murinae</taxon>
        <taxon>Mus</taxon>
        <taxon>Mus</taxon>
    </lineage>
</organism>